<protein>
    <recommendedName>
        <fullName>Potassium transporter 22</fullName>
    </recommendedName>
    <alternativeName>
        <fullName>OsHAK22</fullName>
    </alternativeName>
</protein>
<keyword id="KW-0406">Ion transport</keyword>
<keyword id="KW-0472">Membrane</keyword>
<keyword id="KW-0630">Potassium</keyword>
<keyword id="KW-0633">Potassium transport</keyword>
<keyword id="KW-1185">Reference proteome</keyword>
<keyword id="KW-0812">Transmembrane</keyword>
<keyword id="KW-1133">Transmembrane helix</keyword>
<keyword id="KW-0813">Transport</keyword>
<organism>
    <name type="scientific">Oryza sativa subsp. japonica</name>
    <name type="common">Rice</name>
    <dbReference type="NCBI Taxonomy" id="39947"/>
    <lineage>
        <taxon>Eukaryota</taxon>
        <taxon>Viridiplantae</taxon>
        <taxon>Streptophyta</taxon>
        <taxon>Embryophyta</taxon>
        <taxon>Tracheophyta</taxon>
        <taxon>Spermatophyta</taxon>
        <taxon>Magnoliopsida</taxon>
        <taxon>Liliopsida</taxon>
        <taxon>Poales</taxon>
        <taxon>Poaceae</taxon>
        <taxon>BOP clade</taxon>
        <taxon>Oryzoideae</taxon>
        <taxon>Oryzeae</taxon>
        <taxon>Oryzinae</taxon>
        <taxon>Oryza</taxon>
        <taxon>Oryza sativa</taxon>
    </lineage>
</organism>
<accession>Q69L87</accession>
<accession>A0A0P0X1K8</accession>
<sequence length="790" mass="87895">MAQQQGQGAGTTTVAMMSRNPSYYYSGEGELSLAVQRQDSLYRDASRAGQHEQAHGEGWARTLRLAFQCFGVLYGDIGTSPLYVYSTTFDGGIRHTDDLLGVLSLIIYSFLLFTIIKYVYIALRANDDGDGGTFALYSLISRHAKVSLVPNQQAEDELHLHISKSSSLRRPSVQRLASTAEERAQWVKDLLENSRPVRISLFLLTILATAMVISDACLTPAISVLSAVGGLKDKAPHLNTEQVVWVTVGILVMLFAVQRFGTDKVGYLFAPVVLLWLLLIGGVGVYNLAAHDVGVLRAFNPKYILDYFRRNGRHGWVSLGGVLLCFTGTEALFADLGCFSIRSIQLSFAFGLVPAVLLAYAGQAAYLRVYPDHVGDAFYASTPQVLFWPTLVLALAASVVGSQAMISCAFATISHSQAMGCFPRVKVVHTSRQYQGQVYIPEINLLLGAAACVVTVAARDTVVIGEAHGICVVLVMLITTLLLTVVMVLVWRVNIGWVLVFACVFASTESVYLTSVLYKFAHGGYIPVAMSAVLMGVMGVWHYVHVRRYKYEMERTVSTERVRELVSRRELQRVPGVGLFYTDLVQGIPPVFPHLIDKIPSIHTVLLFVSVKHLPVPHVDPSERFLFRQVEPQEHKLFRCVARYGYRDRLEDARDFVANLVERLQYYVRDVNLYGAAANNKVSYPSSRCDSMGIPKSASYAERLQLQRARSVAMLHSHSQHQRFIQREMEKGVVFILGESEVVARPHSSLLKKLVVNYAYSFLRRNCRQGDKMLAIPRSQLLKVGMSYEI</sequence>
<feature type="chain" id="PRO_0000379537" description="Potassium transporter 22">
    <location>
        <begin position="1"/>
        <end position="790"/>
    </location>
</feature>
<feature type="topological domain" description="Cytoplasmic" evidence="2">
    <location>
        <begin position="1"/>
        <end position="64"/>
    </location>
</feature>
<feature type="transmembrane region" description="Helical; Name=1" evidence="2">
    <location>
        <begin position="65"/>
        <end position="85"/>
    </location>
</feature>
<feature type="topological domain" description="Extracellular" evidence="2">
    <location>
        <begin position="86"/>
        <end position="98"/>
    </location>
</feature>
<feature type="transmembrane region" description="Helical; Name=2" evidence="2">
    <location>
        <begin position="99"/>
        <end position="119"/>
    </location>
</feature>
<feature type="topological domain" description="Cytoplasmic" evidence="2">
    <location>
        <begin position="120"/>
        <end position="198"/>
    </location>
</feature>
<feature type="transmembrane region" description="Helical; Name=3" evidence="2">
    <location>
        <begin position="199"/>
        <end position="219"/>
    </location>
</feature>
<feature type="topological domain" description="Extracellular" evidence="2">
    <location>
        <begin position="220"/>
        <end position="236"/>
    </location>
</feature>
<feature type="transmembrane region" description="Helical; Name=4" evidence="2">
    <location>
        <begin position="237"/>
        <end position="257"/>
    </location>
</feature>
<feature type="topological domain" description="Cytoplasmic" evidence="2">
    <location>
        <begin position="258"/>
        <end position="264"/>
    </location>
</feature>
<feature type="transmembrane region" description="Helical; Name=5" evidence="2">
    <location>
        <begin position="265"/>
        <end position="285"/>
    </location>
</feature>
<feature type="topological domain" description="Extracellular" evidence="2">
    <location>
        <begin position="286"/>
        <end position="318"/>
    </location>
</feature>
<feature type="transmembrane region" description="Helical; Name=6" evidence="2">
    <location>
        <begin position="319"/>
        <end position="339"/>
    </location>
</feature>
<feature type="topological domain" description="Cytoplasmic" evidence="2">
    <location>
        <begin position="340"/>
        <end position="345"/>
    </location>
</feature>
<feature type="transmembrane region" description="Helical; Name=7" evidence="2">
    <location>
        <begin position="346"/>
        <end position="366"/>
    </location>
</feature>
<feature type="topological domain" description="Extracellular" evidence="2">
    <location>
        <begin position="367"/>
        <end position="385"/>
    </location>
</feature>
<feature type="transmembrane region" description="Helical; Name=8" evidence="2">
    <location>
        <begin position="386"/>
        <end position="406"/>
    </location>
</feature>
<feature type="topological domain" description="Cytoplasmic" evidence="2">
    <location>
        <begin position="407"/>
        <end position="437"/>
    </location>
</feature>
<feature type="transmembrane region" description="Helical; Name=9" evidence="2">
    <location>
        <begin position="438"/>
        <end position="458"/>
    </location>
</feature>
<feature type="topological domain" description="Extracellular" evidence="2">
    <location>
        <begin position="459"/>
        <end position="469"/>
    </location>
</feature>
<feature type="transmembrane region" description="Helical; Name=10" evidence="2">
    <location>
        <begin position="470"/>
        <end position="490"/>
    </location>
</feature>
<feature type="topological domain" description="Cytoplasmic" evidence="2">
    <location>
        <begin position="491"/>
        <end position="492"/>
    </location>
</feature>
<feature type="transmembrane region" description="Helical; Name=11" evidence="2">
    <location>
        <begin position="493"/>
        <end position="513"/>
    </location>
</feature>
<feature type="topological domain" description="Extracellular" evidence="2">
    <location>
        <begin position="514"/>
        <end position="519"/>
    </location>
</feature>
<feature type="transmembrane region" description="Helical; Name=12" evidence="2">
    <location>
        <begin position="520"/>
        <end position="540"/>
    </location>
</feature>
<feature type="topological domain" description="Cytoplasmic" evidence="2">
    <location>
        <begin position="541"/>
        <end position="790"/>
    </location>
</feature>
<feature type="sequence conflict" description="In Ref. 4; AK099800." evidence="3" ref="4">
    <original>P</original>
    <variation>Q</variation>
    <location>
        <position position="441"/>
    </location>
</feature>
<evidence type="ECO:0000250" key="1"/>
<evidence type="ECO:0000255" key="2"/>
<evidence type="ECO:0000305" key="3"/>
<dbReference type="EMBL" id="AP005869">
    <property type="protein sequence ID" value="BAD31834.1"/>
    <property type="molecule type" value="Genomic_DNA"/>
</dbReference>
<dbReference type="EMBL" id="AP008213">
    <property type="protein sequence ID" value="BAF20594.1"/>
    <property type="molecule type" value="Genomic_DNA"/>
</dbReference>
<dbReference type="EMBL" id="AP014963">
    <property type="protein sequence ID" value="BAS99684.1"/>
    <property type="molecule type" value="Genomic_DNA"/>
</dbReference>
<dbReference type="EMBL" id="AK099800">
    <property type="status" value="NOT_ANNOTATED_CDS"/>
    <property type="molecule type" value="mRNA"/>
</dbReference>
<dbReference type="FunCoup" id="Q69L87">
    <property type="interactions" value="26"/>
</dbReference>
<dbReference type="STRING" id="39947.Q69L87"/>
<dbReference type="PaxDb" id="39947-Q69L87"/>
<dbReference type="EnsemblPlants" id="Os07t0102100-02">
    <property type="protein sequence ID" value="Os07t0102100-02"/>
    <property type="gene ID" value="Os07g0102100"/>
</dbReference>
<dbReference type="Gramene" id="Os07t0102100-02">
    <property type="protein sequence ID" value="Os07t0102100-02"/>
    <property type="gene ID" value="Os07g0102100"/>
</dbReference>
<dbReference type="KEGG" id="dosa:Os07g0102100"/>
<dbReference type="eggNOG" id="ENOG502QPSA">
    <property type="taxonomic scope" value="Eukaryota"/>
</dbReference>
<dbReference type="HOGENOM" id="CLU_008142_2_0_1"/>
<dbReference type="InParanoid" id="Q69L87"/>
<dbReference type="OMA" id="QIVWMTV"/>
<dbReference type="Proteomes" id="UP000000763">
    <property type="component" value="Chromosome 7"/>
</dbReference>
<dbReference type="Proteomes" id="UP000059680">
    <property type="component" value="Chromosome 7"/>
</dbReference>
<dbReference type="ExpressionAtlas" id="Q69L87">
    <property type="expression patterns" value="baseline and differential"/>
</dbReference>
<dbReference type="GO" id="GO:0016020">
    <property type="term" value="C:membrane"/>
    <property type="evidence" value="ECO:0000318"/>
    <property type="project" value="GO_Central"/>
</dbReference>
<dbReference type="GO" id="GO:0015079">
    <property type="term" value="F:potassium ion transmembrane transporter activity"/>
    <property type="evidence" value="ECO:0000318"/>
    <property type="project" value="GO_Central"/>
</dbReference>
<dbReference type="GO" id="GO:0006813">
    <property type="term" value="P:potassium ion transport"/>
    <property type="evidence" value="ECO:0000318"/>
    <property type="project" value="GO_Central"/>
</dbReference>
<dbReference type="InterPro" id="IPR003855">
    <property type="entry name" value="K+_transporter"/>
</dbReference>
<dbReference type="InterPro" id="IPR053952">
    <property type="entry name" value="K_trans_C"/>
</dbReference>
<dbReference type="InterPro" id="IPR053951">
    <property type="entry name" value="K_trans_N"/>
</dbReference>
<dbReference type="NCBIfam" id="TIGR00794">
    <property type="entry name" value="kup"/>
    <property type="match status" value="1"/>
</dbReference>
<dbReference type="PANTHER" id="PTHR30540">
    <property type="entry name" value="OSMOTIC STRESS POTASSIUM TRANSPORTER"/>
    <property type="match status" value="1"/>
</dbReference>
<dbReference type="PANTHER" id="PTHR30540:SF24">
    <property type="entry name" value="POTASSIUM TRANSPORTER 22"/>
    <property type="match status" value="1"/>
</dbReference>
<dbReference type="Pfam" id="PF02705">
    <property type="entry name" value="K_trans"/>
    <property type="match status" value="1"/>
</dbReference>
<dbReference type="Pfam" id="PF22776">
    <property type="entry name" value="K_trans_C"/>
    <property type="match status" value="1"/>
</dbReference>
<gene>
    <name type="primary">HAK22</name>
    <name type="ordered locus">Os07g0102100</name>
    <name type="ordered locus">LOC_Os07g01214</name>
    <name type="ORF">B1026C12.31-1</name>
    <name type="ORF">B1026C12.31-2</name>
</gene>
<proteinExistence type="evidence at transcript level"/>
<reference key="1">
    <citation type="journal article" date="2005" name="Nature">
        <title>The map-based sequence of the rice genome.</title>
        <authorList>
            <consortium name="International rice genome sequencing project (IRGSP)"/>
        </authorList>
    </citation>
    <scope>NUCLEOTIDE SEQUENCE [LARGE SCALE GENOMIC DNA]</scope>
    <source>
        <strain>cv. Nipponbare</strain>
    </source>
</reference>
<reference key="2">
    <citation type="journal article" date="2008" name="Nucleic Acids Res.">
        <title>The rice annotation project database (RAP-DB): 2008 update.</title>
        <authorList>
            <consortium name="The rice annotation project (RAP)"/>
        </authorList>
    </citation>
    <scope>GENOME REANNOTATION</scope>
    <source>
        <strain>cv. Nipponbare</strain>
    </source>
</reference>
<reference key="3">
    <citation type="journal article" date="2013" name="Rice">
        <title>Improvement of the Oryza sativa Nipponbare reference genome using next generation sequence and optical map data.</title>
        <authorList>
            <person name="Kawahara Y."/>
            <person name="de la Bastide M."/>
            <person name="Hamilton J.P."/>
            <person name="Kanamori H."/>
            <person name="McCombie W.R."/>
            <person name="Ouyang S."/>
            <person name="Schwartz D.C."/>
            <person name="Tanaka T."/>
            <person name="Wu J."/>
            <person name="Zhou S."/>
            <person name="Childs K.L."/>
            <person name="Davidson R.M."/>
            <person name="Lin H."/>
            <person name="Quesada-Ocampo L."/>
            <person name="Vaillancourt B."/>
            <person name="Sakai H."/>
            <person name="Lee S.S."/>
            <person name="Kim J."/>
            <person name="Numa H."/>
            <person name="Itoh T."/>
            <person name="Buell C.R."/>
            <person name="Matsumoto T."/>
        </authorList>
    </citation>
    <scope>GENOME REANNOTATION</scope>
    <source>
        <strain>cv. Nipponbare</strain>
    </source>
</reference>
<reference key="4">
    <citation type="journal article" date="2003" name="Science">
        <title>Collection, mapping, and annotation of over 28,000 cDNA clones from japonica rice.</title>
        <authorList>
            <consortium name="The rice full-length cDNA consortium"/>
        </authorList>
    </citation>
    <scope>NUCLEOTIDE SEQUENCE [LARGE SCALE MRNA]</scope>
    <source>
        <strain>cv. Nipponbare</strain>
    </source>
</reference>
<reference key="5">
    <citation type="journal article" date="2009" name="J. Genet. Genomics">
        <title>Molecular evolution and functional divergence of HAK potassium transporter gene family in rice (Oryza sativa L.).</title>
        <authorList>
            <person name="Yang Z."/>
            <person name="Gao Q."/>
            <person name="Sun C."/>
            <person name="Li W."/>
            <person name="Gu S."/>
            <person name="Xu C."/>
        </authorList>
    </citation>
    <scope>GENE FAMILY</scope>
</reference>
<name>HAK22_ORYSJ</name>
<comment type="function">
    <text evidence="1">High-affinity potassium transporter.</text>
</comment>
<comment type="subcellular location">
    <subcellularLocation>
        <location evidence="3">Membrane</location>
        <topology evidence="3">Multi-pass membrane protein</topology>
    </subcellularLocation>
</comment>
<comment type="similarity">
    <text evidence="3">Belongs to the HAK/KUP transporter (TC 2.A.72.3) family.</text>
</comment>